<proteinExistence type="inferred from homology"/>
<accession>Q03RR1</accession>
<name>FOLD_LEVBA</name>
<sequence>MTTIIDGKQIAKDLNAQTATRVAALKKRDIVPGLAVIVVGDDPASAIYVRNKHKKALKLGIKSVVRELPATTTQAELTQIVMAYNVDPTIHGILVQSPLPAGLDEQAIVAAIDPQKDVDGFHPLNVGRLFANLPGKYPVSCTPRGIMTMLATLPMHLRGKRAVVVGRSLIVGRPMAAMLLNADMTVSVAHVHTQHLSDLTRTADVLVVATGVTHLIKATDVKPGAVVIDVGMDRDENGKLTGDVDFDNVAPRVAAITPVPGGVGPMTIATLMQQTVDLCEWSEQRGNN</sequence>
<comment type="function">
    <text evidence="1">Catalyzes the oxidation of 5,10-methylenetetrahydrofolate to 5,10-methenyltetrahydrofolate and then the hydrolysis of 5,10-methenyltetrahydrofolate to 10-formyltetrahydrofolate.</text>
</comment>
<comment type="catalytic activity">
    <reaction evidence="1">
        <text>(6R)-5,10-methylene-5,6,7,8-tetrahydrofolate + NADP(+) = (6R)-5,10-methenyltetrahydrofolate + NADPH</text>
        <dbReference type="Rhea" id="RHEA:22812"/>
        <dbReference type="ChEBI" id="CHEBI:15636"/>
        <dbReference type="ChEBI" id="CHEBI:57455"/>
        <dbReference type="ChEBI" id="CHEBI:57783"/>
        <dbReference type="ChEBI" id="CHEBI:58349"/>
        <dbReference type="EC" id="1.5.1.5"/>
    </reaction>
</comment>
<comment type="catalytic activity">
    <reaction evidence="1">
        <text>(6R)-5,10-methenyltetrahydrofolate + H2O = (6R)-10-formyltetrahydrofolate + H(+)</text>
        <dbReference type="Rhea" id="RHEA:23700"/>
        <dbReference type="ChEBI" id="CHEBI:15377"/>
        <dbReference type="ChEBI" id="CHEBI:15378"/>
        <dbReference type="ChEBI" id="CHEBI:57455"/>
        <dbReference type="ChEBI" id="CHEBI:195366"/>
        <dbReference type="EC" id="3.5.4.9"/>
    </reaction>
</comment>
<comment type="pathway">
    <text evidence="1">One-carbon metabolism; tetrahydrofolate interconversion.</text>
</comment>
<comment type="subunit">
    <text evidence="1">Homodimer.</text>
</comment>
<comment type="similarity">
    <text evidence="1">Belongs to the tetrahydrofolate dehydrogenase/cyclohydrolase family.</text>
</comment>
<protein>
    <recommendedName>
        <fullName evidence="1">Bifunctional protein FolD</fullName>
    </recommendedName>
    <domain>
        <recommendedName>
            <fullName evidence="1">Methylenetetrahydrofolate dehydrogenase</fullName>
            <ecNumber evidence="1">1.5.1.5</ecNumber>
        </recommendedName>
    </domain>
    <domain>
        <recommendedName>
            <fullName evidence="1">Methenyltetrahydrofolate cyclohydrolase</fullName>
            <ecNumber evidence="1">3.5.4.9</ecNumber>
        </recommendedName>
    </domain>
</protein>
<dbReference type="EC" id="1.5.1.5" evidence="1"/>
<dbReference type="EC" id="3.5.4.9" evidence="1"/>
<dbReference type="EMBL" id="CP000416">
    <property type="protein sequence ID" value="ABJ64111.1"/>
    <property type="molecule type" value="Genomic_DNA"/>
</dbReference>
<dbReference type="RefSeq" id="WP_011667701.1">
    <property type="nucleotide sequence ID" value="NC_008497.1"/>
</dbReference>
<dbReference type="SMR" id="Q03RR1"/>
<dbReference type="STRING" id="387344.LVIS_0978"/>
<dbReference type="KEGG" id="lbr:LVIS_0978"/>
<dbReference type="PATRIC" id="fig|387344.15.peg.955"/>
<dbReference type="eggNOG" id="COG0190">
    <property type="taxonomic scope" value="Bacteria"/>
</dbReference>
<dbReference type="HOGENOM" id="CLU_034045_2_1_9"/>
<dbReference type="UniPathway" id="UPA00193"/>
<dbReference type="Proteomes" id="UP000001652">
    <property type="component" value="Chromosome"/>
</dbReference>
<dbReference type="GO" id="GO:0005829">
    <property type="term" value="C:cytosol"/>
    <property type="evidence" value="ECO:0007669"/>
    <property type="project" value="TreeGrafter"/>
</dbReference>
<dbReference type="GO" id="GO:0004477">
    <property type="term" value="F:methenyltetrahydrofolate cyclohydrolase activity"/>
    <property type="evidence" value="ECO:0007669"/>
    <property type="project" value="UniProtKB-UniRule"/>
</dbReference>
<dbReference type="GO" id="GO:0004488">
    <property type="term" value="F:methylenetetrahydrofolate dehydrogenase (NADP+) activity"/>
    <property type="evidence" value="ECO:0007669"/>
    <property type="project" value="UniProtKB-UniRule"/>
</dbReference>
<dbReference type="GO" id="GO:0000105">
    <property type="term" value="P:L-histidine biosynthetic process"/>
    <property type="evidence" value="ECO:0007669"/>
    <property type="project" value="UniProtKB-KW"/>
</dbReference>
<dbReference type="GO" id="GO:0009086">
    <property type="term" value="P:methionine biosynthetic process"/>
    <property type="evidence" value="ECO:0007669"/>
    <property type="project" value="UniProtKB-KW"/>
</dbReference>
<dbReference type="GO" id="GO:0006164">
    <property type="term" value="P:purine nucleotide biosynthetic process"/>
    <property type="evidence" value="ECO:0007669"/>
    <property type="project" value="UniProtKB-KW"/>
</dbReference>
<dbReference type="GO" id="GO:0035999">
    <property type="term" value="P:tetrahydrofolate interconversion"/>
    <property type="evidence" value="ECO:0007669"/>
    <property type="project" value="UniProtKB-UniRule"/>
</dbReference>
<dbReference type="CDD" id="cd01080">
    <property type="entry name" value="NAD_bind_m-THF_DH_Cyclohyd"/>
    <property type="match status" value="1"/>
</dbReference>
<dbReference type="FunFam" id="3.40.50.720:FF:000006">
    <property type="entry name" value="Bifunctional protein FolD"/>
    <property type="match status" value="1"/>
</dbReference>
<dbReference type="FunFam" id="3.40.50.10860:FF:000005">
    <property type="entry name" value="C-1-tetrahydrofolate synthase, cytoplasmic, putative"/>
    <property type="match status" value="1"/>
</dbReference>
<dbReference type="Gene3D" id="3.40.50.10860">
    <property type="entry name" value="Leucine Dehydrogenase, chain A, domain 1"/>
    <property type="match status" value="1"/>
</dbReference>
<dbReference type="Gene3D" id="3.40.50.720">
    <property type="entry name" value="NAD(P)-binding Rossmann-like Domain"/>
    <property type="match status" value="1"/>
</dbReference>
<dbReference type="HAMAP" id="MF_01576">
    <property type="entry name" value="THF_DHG_CYH"/>
    <property type="match status" value="1"/>
</dbReference>
<dbReference type="InterPro" id="IPR046346">
    <property type="entry name" value="Aminoacid_DH-like_N_sf"/>
</dbReference>
<dbReference type="InterPro" id="IPR036291">
    <property type="entry name" value="NAD(P)-bd_dom_sf"/>
</dbReference>
<dbReference type="InterPro" id="IPR000672">
    <property type="entry name" value="THF_DH/CycHdrlase"/>
</dbReference>
<dbReference type="InterPro" id="IPR020630">
    <property type="entry name" value="THF_DH/CycHdrlase_cat_dom"/>
</dbReference>
<dbReference type="InterPro" id="IPR020867">
    <property type="entry name" value="THF_DH/CycHdrlase_CS"/>
</dbReference>
<dbReference type="InterPro" id="IPR020631">
    <property type="entry name" value="THF_DH/CycHdrlase_NAD-bd_dom"/>
</dbReference>
<dbReference type="NCBIfam" id="NF010783">
    <property type="entry name" value="PRK14186.1"/>
    <property type="match status" value="1"/>
</dbReference>
<dbReference type="PANTHER" id="PTHR48099:SF5">
    <property type="entry name" value="C-1-TETRAHYDROFOLATE SYNTHASE, CYTOPLASMIC"/>
    <property type="match status" value="1"/>
</dbReference>
<dbReference type="PANTHER" id="PTHR48099">
    <property type="entry name" value="C-1-TETRAHYDROFOLATE SYNTHASE, CYTOPLASMIC-RELATED"/>
    <property type="match status" value="1"/>
</dbReference>
<dbReference type="Pfam" id="PF00763">
    <property type="entry name" value="THF_DHG_CYH"/>
    <property type="match status" value="1"/>
</dbReference>
<dbReference type="Pfam" id="PF02882">
    <property type="entry name" value="THF_DHG_CYH_C"/>
    <property type="match status" value="1"/>
</dbReference>
<dbReference type="PRINTS" id="PR00085">
    <property type="entry name" value="THFDHDRGNASE"/>
</dbReference>
<dbReference type="SUPFAM" id="SSF53223">
    <property type="entry name" value="Aminoacid dehydrogenase-like, N-terminal domain"/>
    <property type="match status" value="1"/>
</dbReference>
<dbReference type="SUPFAM" id="SSF51735">
    <property type="entry name" value="NAD(P)-binding Rossmann-fold domains"/>
    <property type="match status" value="1"/>
</dbReference>
<dbReference type="PROSITE" id="PS00767">
    <property type="entry name" value="THF_DHG_CYH_2"/>
    <property type="match status" value="1"/>
</dbReference>
<organism>
    <name type="scientific">Levilactobacillus brevis (strain ATCC 367 / BCRC 12310 / CIP 105137 / JCM 1170 / LMG 11437 / NCIMB 947 / NCTC 947)</name>
    <name type="common">Lactobacillus brevis</name>
    <dbReference type="NCBI Taxonomy" id="387344"/>
    <lineage>
        <taxon>Bacteria</taxon>
        <taxon>Bacillati</taxon>
        <taxon>Bacillota</taxon>
        <taxon>Bacilli</taxon>
        <taxon>Lactobacillales</taxon>
        <taxon>Lactobacillaceae</taxon>
        <taxon>Levilactobacillus</taxon>
    </lineage>
</organism>
<feature type="chain" id="PRO_0000305828" description="Bifunctional protein FolD">
    <location>
        <begin position="1"/>
        <end position="288"/>
    </location>
</feature>
<feature type="binding site" evidence="1">
    <location>
        <begin position="166"/>
        <end position="168"/>
    </location>
    <ligand>
        <name>NADP(+)</name>
        <dbReference type="ChEBI" id="CHEBI:58349"/>
    </ligand>
</feature>
<gene>
    <name evidence="1" type="primary">folD</name>
    <name type="ordered locus">LVIS_0978</name>
</gene>
<evidence type="ECO:0000255" key="1">
    <source>
        <dbReference type="HAMAP-Rule" id="MF_01576"/>
    </source>
</evidence>
<reference key="1">
    <citation type="journal article" date="2006" name="Proc. Natl. Acad. Sci. U.S.A.">
        <title>Comparative genomics of the lactic acid bacteria.</title>
        <authorList>
            <person name="Makarova K.S."/>
            <person name="Slesarev A."/>
            <person name="Wolf Y.I."/>
            <person name="Sorokin A."/>
            <person name="Mirkin B."/>
            <person name="Koonin E.V."/>
            <person name="Pavlov A."/>
            <person name="Pavlova N."/>
            <person name="Karamychev V."/>
            <person name="Polouchine N."/>
            <person name="Shakhova V."/>
            <person name="Grigoriev I."/>
            <person name="Lou Y."/>
            <person name="Rohksar D."/>
            <person name="Lucas S."/>
            <person name="Huang K."/>
            <person name="Goodstein D.M."/>
            <person name="Hawkins T."/>
            <person name="Plengvidhya V."/>
            <person name="Welker D."/>
            <person name="Hughes J."/>
            <person name="Goh Y."/>
            <person name="Benson A."/>
            <person name="Baldwin K."/>
            <person name="Lee J.-H."/>
            <person name="Diaz-Muniz I."/>
            <person name="Dosti B."/>
            <person name="Smeianov V."/>
            <person name="Wechter W."/>
            <person name="Barabote R."/>
            <person name="Lorca G."/>
            <person name="Altermann E."/>
            <person name="Barrangou R."/>
            <person name="Ganesan B."/>
            <person name="Xie Y."/>
            <person name="Rawsthorne H."/>
            <person name="Tamir D."/>
            <person name="Parker C."/>
            <person name="Breidt F."/>
            <person name="Broadbent J.R."/>
            <person name="Hutkins R."/>
            <person name="O'Sullivan D."/>
            <person name="Steele J."/>
            <person name="Unlu G."/>
            <person name="Saier M.H. Jr."/>
            <person name="Klaenhammer T."/>
            <person name="Richardson P."/>
            <person name="Kozyavkin S."/>
            <person name="Weimer B.C."/>
            <person name="Mills D.A."/>
        </authorList>
    </citation>
    <scope>NUCLEOTIDE SEQUENCE [LARGE SCALE GENOMIC DNA]</scope>
    <source>
        <strain>ATCC 367 / BCRC 12310 / CIP 105137 / JCM 1170 / LMG 11437 / NCIMB 947 / NCTC 947</strain>
    </source>
</reference>
<keyword id="KW-0028">Amino-acid biosynthesis</keyword>
<keyword id="KW-0368">Histidine biosynthesis</keyword>
<keyword id="KW-0378">Hydrolase</keyword>
<keyword id="KW-0486">Methionine biosynthesis</keyword>
<keyword id="KW-0511">Multifunctional enzyme</keyword>
<keyword id="KW-0521">NADP</keyword>
<keyword id="KW-0554">One-carbon metabolism</keyword>
<keyword id="KW-0560">Oxidoreductase</keyword>
<keyword id="KW-0658">Purine biosynthesis</keyword>
<keyword id="KW-1185">Reference proteome</keyword>